<name>ARTM_SHIFL</name>
<reference key="1">
    <citation type="journal article" date="2002" name="Nucleic Acids Res.">
        <title>Genome sequence of Shigella flexneri 2a: insights into pathogenicity through comparison with genomes of Escherichia coli K12 and O157.</title>
        <authorList>
            <person name="Jin Q."/>
            <person name="Yuan Z."/>
            <person name="Xu J."/>
            <person name="Wang Y."/>
            <person name="Shen Y."/>
            <person name="Lu W."/>
            <person name="Wang J."/>
            <person name="Liu H."/>
            <person name="Yang J."/>
            <person name="Yang F."/>
            <person name="Zhang X."/>
            <person name="Zhang J."/>
            <person name="Yang G."/>
            <person name="Wu H."/>
            <person name="Qu D."/>
            <person name="Dong J."/>
            <person name="Sun L."/>
            <person name="Xue Y."/>
            <person name="Zhao A."/>
            <person name="Gao Y."/>
            <person name="Zhu J."/>
            <person name="Kan B."/>
            <person name="Ding K."/>
            <person name="Chen S."/>
            <person name="Cheng H."/>
            <person name="Yao Z."/>
            <person name="He B."/>
            <person name="Chen R."/>
            <person name="Ma D."/>
            <person name="Qiang B."/>
            <person name="Wen Y."/>
            <person name="Hou Y."/>
            <person name="Yu J."/>
        </authorList>
    </citation>
    <scope>NUCLEOTIDE SEQUENCE [LARGE SCALE GENOMIC DNA]</scope>
    <source>
        <strain>301 / Serotype 2a</strain>
    </source>
</reference>
<reference key="2">
    <citation type="journal article" date="2003" name="Infect. Immun.">
        <title>Complete genome sequence and comparative genomics of Shigella flexneri serotype 2a strain 2457T.</title>
        <authorList>
            <person name="Wei J."/>
            <person name="Goldberg M.B."/>
            <person name="Burland V."/>
            <person name="Venkatesan M.M."/>
            <person name="Deng W."/>
            <person name="Fournier G."/>
            <person name="Mayhew G.F."/>
            <person name="Plunkett G. III"/>
            <person name="Rose D.J."/>
            <person name="Darling A."/>
            <person name="Mau B."/>
            <person name="Perna N.T."/>
            <person name="Payne S.M."/>
            <person name="Runyen-Janecky L.J."/>
            <person name="Zhou S."/>
            <person name="Schwartz D.C."/>
            <person name="Blattner F.R."/>
        </authorList>
    </citation>
    <scope>NUCLEOTIDE SEQUENCE [LARGE SCALE GENOMIC DNA]</scope>
    <source>
        <strain>ATCC 700930 / 2457T / Serotype 2a</strain>
    </source>
</reference>
<keyword id="KW-0029">Amino-acid transport</keyword>
<keyword id="KW-0997">Cell inner membrane</keyword>
<keyword id="KW-1003">Cell membrane</keyword>
<keyword id="KW-0472">Membrane</keyword>
<keyword id="KW-1185">Reference proteome</keyword>
<keyword id="KW-0812">Transmembrane</keyword>
<keyword id="KW-1133">Transmembrane helix</keyword>
<keyword id="KW-0813">Transport</keyword>
<proteinExistence type="inferred from homology"/>
<evidence type="ECO:0000250" key="1"/>
<evidence type="ECO:0000255" key="2"/>
<evidence type="ECO:0000255" key="3">
    <source>
        <dbReference type="PROSITE-ProRule" id="PRU00441"/>
    </source>
</evidence>
<evidence type="ECO:0000305" key="4"/>
<sequence length="222" mass="24914">MFEYLPELMKGLHTSLTLTVASLIVALILALIFTIILTLKTPVLVWLVRGYITLFTGTPLLVQIFLIYYGPGQFPTLQEYPALWHLLSEPWLCALIALSLNSAAYTTQLFYGAIRAIPEGQWQSCSALGMSKKDTLAILLPYAFKRSLSSYSNEVVLVFKSTSLAYTITLMEVMGYSQLLYGRTYDVMVFGAAGIIYLVVNGLLTLMMRLIERKALAFERRN</sequence>
<protein>
    <recommendedName>
        <fullName>Arginine ABC transporter permease protein ArtM</fullName>
    </recommendedName>
</protein>
<gene>
    <name type="primary">artM</name>
    <name type="ordered locus">SF0815</name>
    <name type="ordered locus">S0857</name>
</gene>
<accession>P0AE33</accession>
<accession>P30862</accession>
<accession>P77311</accession>
<organism>
    <name type="scientific">Shigella flexneri</name>
    <dbReference type="NCBI Taxonomy" id="623"/>
    <lineage>
        <taxon>Bacteria</taxon>
        <taxon>Pseudomonadati</taxon>
        <taxon>Pseudomonadota</taxon>
        <taxon>Gammaproteobacteria</taxon>
        <taxon>Enterobacterales</taxon>
        <taxon>Enterobacteriaceae</taxon>
        <taxon>Shigella</taxon>
    </lineage>
</organism>
<dbReference type="EMBL" id="AE005674">
    <property type="protein sequence ID" value="AAN42448.1"/>
    <property type="molecule type" value="Genomic_DNA"/>
</dbReference>
<dbReference type="EMBL" id="AE014073">
    <property type="protein sequence ID" value="AAP16320.1"/>
    <property type="molecule type" value="Genomic_DNA"/>
</dbReference>
<dbReference type="RefSeq" id="NP_706741.1">
    <property type="nucleotide sequence ID" value="NC_004337.2"/>
</dbReference>
<dbReference type="RefSeq" id="WP_000464491.1">
    <property type="nucleotide sequence ID" value="NZ_WPGW01000056.1"/>
</dbReference>
<dbReference type="SMR" id="P0AE33"/>
<dbReference type="STRING" id="198214.SF0815"/>
<dbReference type="PaxDb" id="198214-SF0815"/>
<dbReference type="GeneID" id="1023792"/>
<dbReference type="GeneID" id="75202487"/>
<dbReference type="KEGG" id="sfl:SF0815"/>
<dbReference type="KEGG" id="sfx:S0857"/>
<dbReference type="PATRIC" id="fig|198214.7.peg.944"/>
<dbReference type="HOGENOM" id="CLU_019602_1_4_6"/>
<dbReference type="Proteomes" id="UP000001006">
    <property type="component" value="Chromosome"/>
</dbReference>
<dbReference type="Proteomes" id="UP000002673">
    <property type="component" value="Chromosome"/>
</dbReference>
<dbReference type="GO" id="GO:0043190">
    <property type="term" value="C:ATP-binding cassette (ABC) transporter complex"/>
    <property type="evidence" value="ECO:0007669"/>
    <property type="project" value="InterPro"/>
</dbReference>
<dbReference type="GO" id="GO:0022857">
    <property type="term" value="F:transmembrane transporter activity"/>
    <property type="evidence" value="ECO:0007669"/>
    <property type="project" value="InterPro"/>
</dbReference>
<dbReference type="GO" id="GO:0006865">
    <property type="term" value="P:amino acid transport"/>
    <property type="evidence" value="ECO:0007669"/>
    <property type="project" value="UniProtKB-KW"/>
</dbReference>
<dbReference type="CDD" id="cd06261">
    <property type="entry name" value="TM_PBP2"/>
    <property type="match status" value="1"/>
</dbReference>
<dbReference type="FunFam" id="1.10.3720.10:FF:000017">
    <property type="entry name" value="Arginine ABC transporter permease protein ArtM"/>
    <property type="match status" value="1"/>
</dbReference>
<dbReference type="Gene3D" id="1.10.3720.10">
    <property type="entry name" value="MetI-like"/>
    <property type="match status" value="1"/>
</dbReference>
<dbReference type="InterPro" id="IPR010065">
    <property type="entry name" value="AA_ABC_transptr_permease_3TM"/>
</dbReference>
<dbReference type="InterPro" id="IPR043429">
    <property type="entry name" value="ArtM/GltK/GlnP/TcyL/YhdX-like"/>
</dbReference>
<dbReference type="InterPro" id="IPR000515">
    <property type="entry name" value="MetI-like"/>
</dbReference>
<dbReference type="InterPro" id="IPR035906">
    <property type="entry name" value="MetI-like_sf"/>
</dbReference>
<dbReference type="NCBIfam" id="TIGR01726">
    <property type="entry name" value="HEQRo_perm_3TM"/>
    <property type="match status" value="1"/>
</dbReference>
<dbReference type="NCBIfam" id="NF008336">
    <property type="entry name" value="PRK11122.1"/>
    <property type="match status" value="1"/>
</dbReference>
<dbReference type="PANTHER" id="PTHR30614:SF10">
    <property type="entry name" value="ARGININE ABC TRANSPORTER PERMEASE PROTEIN ARTM"/>
    <property type="match status" value="1"/>
</dbReference>
<dbReference type="PANTHER" id="PTHR30614">
    <property type="entry name" value="MEMBRANE COMPONENT OF AMINO ACID ABC TRANSPORTER"/>
    <property type="match status" value="1"/>
</dbReference>
<dbReference type="Pfam" id="PF00528">
    <property type="entry name" value="BPD_transp_1"/>
    <property type="match status" value="1"/>
</dbReference>
<dbReference type="SUPFAM" id="SSF161098">
    <property type="entry name" value="MetI-like"/>
    <property type="match status" value="1"/>
</dbReference>
<dbReference type="PROSITE" id="PS50928">
    <property type="entry name" value="ABC_TM1"/>
    <property type="match status" value="1"/>
</dbReference>
<feature type="chain" id="PRO_0000059960" description="Arginine ABC transporter permease protein ArtM">
    <location>
        <begin position="1"/>
        <end position="222"/>
    </location>
</feature>
<feature type="topological domain" description="Periplasmic" evidence="2">
    <location>
        <begin position="1"/>
        <end position="15"/>
    </location>
</feature>
<feature type="transmembrane region" description="Helical" evidence="3">
    <location>
        <begin position="16"/>
        <end position="36"/>
    </location>
</feature>
<feature type="topological domain" description="Cytoplasmic" evidence="2">
    <location>
        <begin position="37"/>
        <end position="49"/>
    </location>
</feature>
<feature type="transmembrane region" description="Helical" evidence="3">
    <location>
        <begin position="50"/>
        <end position="70"/>
    </location>
</feature>
<feature type="topological domain" description="Periplasmic" evidence="2">
    <location>
        <begin position="71"/>
        <end position="79"/>
    </location>
</feature>
<feature type="transmembrane region" description="Helical" evidence="3">
    <location>
        <begin position="80"/>
        <end position="100"/>
    </location>
</feature>
<feature type="topological domain" description="Cytoplasmic" evidence="2">
    <location>
        <begin position="101"/>
        <end position="154"/>
    </location>
</feature>
<feature type="transmembrane region" description="Helical" evidence="3">
    <location>
        <begin position="155"/>
        <end position="175"/>
    </location>
</feature>
<feature type="topological domain" description="Periplasmic" evidence="2">
    <location>
        <begin position="176"/>
        <end position="186"/>
    </location>
</feature>
<feature type="transmembrane region" description="Helical" evidence="3">
    <location>
        <begin position="187"/>
        <end position="207"/>
    </location>
</feature>
<feature type="topological domain" description="Cytoplasmic" evidence="2">
    <location>
        <begin position="208"/>
        <end position="222"/>
    </location>
</feature>
<feature type="domain" description="ABC transmembrane type-1" evidence="3">
    <location>
        <begin position="12"/>
        <end position="208"/>
    </location>
</feature>
<comment type="function">
    <text evidence="1">Part of the ABC transporter complex ArtPIQMJ involved in arginine transport. Probably responsible for the translocation of the substrate across the membrane (By similarity).</text>
</comment>
<comment type="subunit">
    <text evidence="1">The complex is composed of two ATP-binding proteins (ArtP), two transmembrane proteins (ArtM and ArtQ) and two solute-binding proteins (ArtJ and ArtI).</text>
</comment>
<comment type="subcellular location">
    <subcellularLocation>
        <location evidence="1">Cell inner membrane</location>
        <topology evidence="3">Multi-pass membrane protein</topology>
    </subcellularLocation>
</comment>
<comment type="similarity">
    <text evidence="4">Belongs to the binding-protein-dependent transport system permease family. HisMQ subfamily.</text>
</comment>